<sequence>MSYDLETAERAAYAPFFGYMGAASAQIFTVLGAAYGTAKSAVGICSMGVMRPELIMKSVIPVIMAGIIGIYGLVVAMVLKGKVTSASAGYDLNKGFAHLAAGLTCGLCGLGAGYAIGIVGDAGVRGTAQQPRLFVGMILILIFSEVLGLYGMIVALILGTS</sequence>
<protein>
    <recommendedName>
        <fullName evidence="6">V-type proton ATPase 16 kDa proteolipid subunit c 3</fullName>
        <shortName evidence="6">V-ATPase 16 kDa proteolipid subunit c 3</shortName>
    </recommendedName>
    <alternativeName>
        <fullName evidence="6">Vacuolar proton pump 16 kDa proteolipid subunit c 3</fullName>
    </alternativeName>
</protein>
<name>VATL3_CAEEL</name>
<proteinExistence type="evidence at transcript level"/>
<comment type="function">
    <text evidence="1 2">Proton-conducting pore forming subunit of the V0 complex of vacuolar(H+)-ATPase (V-ATPase), a multisubunit enzyme composed of a peripheral complex (V1) that hydrolyzes ATP and a membrane integral complex (V0) that translocates protons. V-ATPase is responsible for acidifying and maintaining the pH of intracellular compartments and in some cell types, is targeted to the plasma membrane, where it is responsible for acidifying the extracellular environment (By similarity). Involved in necrotic cell death. Required along with other vacuolar ATPase components for the removal of protein aggregates which form in immature oocytes in the distal gonad. This removal occurs as the oocytes mature and move to the proximal gonad, is triggered by the introduction of sperm through mating and occurs before fertilization. The introduction of sperm triggers V-ATPase accumulation in proximal oocytes and induces lysosomal acidification which leads to engulfing of protein aggregates by lysosomes and subsequent clearance of the aggregates. Lysosomal acidification also leads to changes in mitochondrial morphology and function. Mitochondria in distal immature oocytes are fragmented, produce high levels of reactive oxygen species (ROS) and have high membrane potential, indicative of metabolic inactivity. In contrast, mitochondria in proximal mature oocytes are tubular with lower ROS levels and membrane potential, indicative of an active metabolic state required for aggregate mobilization before clearance (By similarity).</text>
</comment>
<comment type="subunit">
    <text evidence="2">V-ATPase is a heteromultimeric enzyme made up of two complexes: the ATP-hydrolytic V1 complex and the proton translocation V0 complex (By similarity). The V1 complex consists of three catalytic AB heterodimers that form a heterohexamer, three peripheral stalks each consisting of EG heterodimers, one central rotor including subunits D and F, and the regulatory subunits C and H (By similarity). The proton translocation complex V0 consists of the proton transport subunit a, a ring of proteolipid subunits c9c'', rotary subunit d, subunits e and f, and the accessory subunits vah-19/Ac45 and vah-20/PRR (By similarity).</text>
</comment>
<comment type="subcellular location">
    <subcellularLocation>
        <location evidence="4">Membrane</location>
        <topology evidence="4">Multi-pass membrane protein</topology>
    </subcellularLocation>
</comment>
<comment type="tissue specificity">
    <text evidence="5">Expressed ubiquitously. Higher levels of vha-2 are found in adult H-shaped excretory cell and rectum. Higher levels of vha-3 are found in gastrointestinal and hypodermal cells, as well as H-shaped excretory cell.</text>
</comment>
<comment type="developmental stage">
    <text evidence="5">High levels during embryogenesis, moderate levels during L1, L4 and adult stages and very low levels during L2 and L3 stages.</text>
</comment>
<comment type="miscellaneous">
    <text>Vha-11 and vha-3 are transcribed on a dicistronic transcript where vha-3 is the upstream transcript and vha-11 the downstream.</text>
</comment>
<comment type="similarity">
    <text evidence="6">Belongs to the V-ATPase proteolipid subunit family.</text>
</comment>
<evidence type="ECO:0000250" key="1">
    <source>
        <dbReference type="UniProtKB" id="C0HLB3"/>
    </source>
</evidence>
<evidence type="ECO:0000250" key="2">
    <source>
        <dbReference type="UniProtKB" id="P23956"/>
    </source>
</evidence>
<evidence type="ECO:0000250" key="3">
    <source>
        <dbReference type="UniProtKB" id="P63081"/>
    </source>
</evidence>
<evidence type="ECO:0000255" key="4"/>
<evidence type="ECO:0000269" key="5">
    <source>
    </source>
</evidence>
<evidence type="ECO:0000305" key="6"/>
<evidence type="ECO:0000312" key="7">
    <source>
        <dbReference type="WormBase" id="R10E11.2"/>
    </source>
</evidence>
<dbReference type="EMBL" id="AB009566">
    <property type="protein sequence ID" value="BAA75066.1"/>
    <property type="molecule type" value="mRNA"/>
</dbReference>
<dbReference type="EMBL" id="BX284603">
    <property type="protein sequence ID" value="CAA82355.1"/>
    <property type="molecule type" value="Genomic_DNA"/>
</dbReference>
<dbReference type="PIR" id="S40714">
    <property type="entry name" value="S40714"/>
</dbReference>
<dbReference type="RefSeq" id="NP_001367642.1">
    <property type="nucleotide sequence ID" value="NM_001380088.1"/>
</dbReference>
<dbReference type="RefSeq" id="NP_500188.1">
    <property type="nucleotide sequence ID" value="NM_067787.6"/>
</dbReference>
<dbReference type="SMR" id="C0HLB4"/>
<dbReference type="FunCoup" id="C0HLB4">
    <property type="interactions" value="2184"/>
</dbReference>
<dbReference type="EnsemblMetazoa" id="R10E11.2.1">
    <property type="protein sequence ID" value="R10E11.2.1"/>
    <property type="gene ID" value="WBGene00006911"/>
</dbReference>
<dbReference type="GeneID" id="177018"/>
<dbReference type="KEGG" id="cel:CELE_R10E11.2"/>
<dbReference type="AGR" id="WB:WBGene00006911"/>
<dbReference type="CTD" id="187779"/>
<dbReference type="WormBase" id="R10E11.2">
    <property type="protein sequence ID" value="CE06290"/>
    <property type="gene ID" value="WBGene00006911"/>
    <property type="gene designation" value="vha-2"/>
</dbReference>
<dbReference type="GeneTree" id="ENSGT00550000074873"/>
<dbReference type="InParanoid" id="C0HLB4"/>
<dbReference type="OMA" id="MGVMKPD"/>
<dbReference type="OrthoDB" id="1744869at2759"/>
<dbReference type="Reactome" id="R-CEL-1222556">
    <property type="pathway name" value="ROS and RNS production in phagocytes"/>
</dbReference>
<dbReference type="Reactome" id="R-CEL-6798695">
    <property type="pathway name" value="Neutrophil degranulation"/>
</dbReference>
<dbReference type="Reactome" id="R-CEL-77387">
    <property type="pathway name" value="Insulin receptor recycling"/>
</dbReference>
<dbReference type="Reactome" id="R-CEL-917977">
    <property type="pathway name" value="Transferrin endocytosis and recycling"/>
</dbReference>
<dbReference type="Reactome" id="R-CEL-9639288">
    <property type="pathway name" value="Amino acids regulate mTORC1"/>
</dbReference>
<dbReference type="Reactome" id="R-CEL-983712">
    <property type="pathway name" value="Ion channel transport"/>
</dbReference>
<dbReference type="PRO" id="PR:C0HLB4"/>
<dbReference type="Proteomes" id="UP000001940">
    <property type="component" value="Chromosome III"/>
</dbReference>
<dbReference type="Bgee" id="WBGene00006911">
    <property type="expression patterns" value="Expressed in embryo and 4 other cell types or tissues"/>
</dbReference>
<dbReference type="ExpressionAtlas" id="C0HLB4">
    <property type="expression patterns" value="baseline"/>
</dbReference>
<dbReference type="GO" id="GO:0016020">
    <property type="term" value="C:membrane"/>
    <property type="evidence" value="ECO:0000318"/>
    <property type="project" value="GO_Central"/>
</dbReference>
<dbReference type="GO" id="GO:0000220">
    <property type="term" value="C:vacuolar proton-transporting V-type ATPase, V0 domain"/>
    <property type="evidence" value="ECO:0000303"/>
    <property type="project" value="WormBase"/>
</dbReference>
<dbReference type="GO" id="GO:0046961">
    <property type="term" value="F:proton-transporting ATPase activity, rotational mechanism"/>
    <property type="evidence" value="ECO:0007669"/>
    <property type="project" value="InterPro"/>
</dbReference>
<dbReference type="GO" id="GO:0012501">
    <property type="term" value="P:programmed cell death"/>
    <property type="evidence" value="ECO:0007669"/>
    <property type="project" value="UniProtKB-KW"/>
</dbReference>
<dbReference type="GO" id="GO:1902600">
    <property type="term" value="P:proton transmembrane transport"/>
    <property type="evidence" value="ECO:0000303"/>
    <property type="project" value="UniProtKB"/>
</dbReference>
<dbReference type="CDD" id="cd18175">
    <property type="entry name" value="ATP-synt_Vo_c_ATP6C_rpt1"/>
    <property type="match status" value="1"/>
</dbReference>
<dbReference type="CDD" id="cd18176">
    <property type="entry name" value="ATP-synt_Vo_c_ATP6C_rpt2"/>
    <property type="match status" value="1"/>
</dbReference>
<dbReference type="FunFam" id="1.20.120.610:FF:000001">
    <property type="entry name" value="V-type proton ATPase proteolipid subunit"/>
    <property type="match status" value="1"/>
</dbReference>
<dbReference type="Gene3D" id="1.20.120.610">
    <property type="entry name" value="lithium bound rotor ring of v- atpase"/>
    <property type="match status" value="1"/>
</dbReference>
<dbReference type="InterPro" id="IPR002379">
    <property type="entry name" value="ATPase_proteolipid_c-like_dom"/>
</dbReference>
<dbReference type="InterPro" id="IPR000245">
    <property type="entry name" value="ATPase_proteolipid_csu"/>
</dbReference>
<dbReference type="InterPro" id="IPR011555">
    <property type="entry name" value="ATPase_proteolipid_su_C_euk"/>
</dbReference>
<dbReference type="InterPro" id="IPR035921">
    <property type="entry name" value="F/V-ATP_Csub_sf"/>
</dbReference>
<dbReference type="NCBIfam" id="TIGR01100">
    <property type="entry name" value="V_ATP_synt_C"/>
    <property type="match status" value="1"/>
</dbReference>
<dbReference type="PANTHER" id="PTHR10263">
    <property type="entry name" value="V-TYPE PROTON ATPASE PROTEOLIPID SUBUNIT"/>
    <property type="match status" value="1"/>
</dbReference>
<dbReference type="Pfam" id="PF00137">
    <property type="entry name" value="ATP-synt_C"/>
    <property type="match status" value="2"/>
</dbReference>
<dbReference type="PRINTS" id="PR00122">
    <property type="entry name" value="VACATPASE"/>
</dbReference>
<dbReference type="SUPFAM" id="SSF81333">
    <property type="entry name" value="F1F0 ATP synthase subunit C"/>
    <property type="match status" value="2"/>
</dbReference>
<keyword id="KW-0375">Hydrogen ion transport</keyword>
<keyword id="KW-0406">Ion transport</keyword>
<keyword id="KW-0472">Membrane</keyword>
<keyword id="KW-1210">Necrosis</keyword>
<keyword id="KW-1185">Reference proteome</keyword>
<keyword id="KW-0812">Transmembrane</keyword>
<keyword id="KW-1133">Transmembrane helix</keyword>
<keyword id="KW-0813">Transport</keyword>
<accession>C0HLB4</accession>
<accession>P34546</accession>
<accession>P83577</accession>
<reference key="1">
    <citation type="journal article" date="1998" name="J. Biol. Chem.">
        <title>Multiple genes for vacuolar-type ATPase proteolipids in Caenorhabditis elegans: a new gene, vha-3, has a distinct cell-specific distribution.</title>
        <authorList>
            <person name="Oka T."/>
            <person name="Yamamoto R."/>
            <person name="Futai M."/>
        </authorList>
    </citation>
    <scope>NUCLEOTIDE SEQUENCE [MRNA]</scope>
    <scope>TISSUE SPECIFICITY</scope>
    <scope>DEVELOPMENTAL STAGE</scope>
</reference>
<reference key="2">
    <citation type="journal article" date="1994" name="Nature">
        <title>2.2 Mb of contiguous nucleotide sequence from chromosome III of C. elegans.</title>
        <authorList>
            <person name="Wilson R."/>
            <person name="Ainscough R."/>
            <person name="Anderson K."/>
            <person name="Baynes C."/>
            <person name="Berks M."/>
            <person name="Bonfield J."/>
            <person name="Burton J."/>
            <person name="Connell M."/>
            <person name="Copsey T."/>
            <person name="Cooper J."/>
            <person name="Coulson A."/>
            <person name="Craxton M."/>
            <person name="Dear S."/>
            <person name="Du Z."/>
            <person name="Durbin R."/>
            <person name="Favello A."/>
            <person name="Fraser A."/>
            <person name="Fulton L."/>
            <person name="Gardner A."/>
            <person name="Green P."/>
            <person name="Hawkins T."/>
            <person name="Hillier L."/>
            <person name="Jier M."/>
            <person name="Johnston L."/>
            <person name="Jones M."/>
            <person name="Kershaw J."/>
            <person name="Kirsten J."/>
            <person name="Laisster N."/>
            <person name="Latreille P."/>
            <person name="Lightning J."/>
            <person name="Lloyd C."/>
            <person name="Mortimore B."/>
            <person name="O'Callaghan M."/>
            <person name="Parsons J."/>
            <person name="Percy C."/>
            <person name="Rifken L."/>
            <person name="Roopra A."/>
            <person name="Saunders D."/>
            <person name="Shownkeen R."/>
            <person name="Sims M."/>
            <person name="Smaldon N."/>
            <person name="Smith A."/>
            <person name="Smith M."/>
            <person name="Sonnhammer E."/>
            <person name="Staden R."/>
            <person name="Sulston J."/>
            <person name="Thierry-Mieg J."/>
            <person name="Thomas K."/>
            <person name="Vaudin M."/>
            <person name="Vaughan K."/>
            <person name="Waterston R."/>
            <person name="Watson A."/>
            <person name="Weinstock L."/>
            <person name="Wilkinson-Sproat J."/>
            <person name="Wohldman P."/>
        </authorList>
    </citation>
    <scope>NUCLEOTIDE SEQUENCE [LARGE SCALE GENOMIC DNA]</scope>
    <source>
        <strain>Bristol N2</strain>
    </source>
</reference>
<reference key="3">
    <citation type="journal article" date="1998" name="Science">
        <title>Genome sequence of the nematode C. elegans: a platform for investigating biology.</title>
        <authorList>
            <consortium name="The C. elegans sequencing consortium"/>
        </authorList>
    </citation>
    <scope>NUCLEOTIDE SEQUENCE [LARGE SCALE GENOMIC DNA]</scope>
    <source>
        <strain>Bristol N2</strain>
    </source>
</reference>
<gene>
    <name evidence="7" type="primary">vha-2</name>
    <name evidence="7" type="ORF">R10E11.2</name>
</gene>
<organism>
    <name type="scientific">Caenorhabditis elegans</name>
    <dbReference type="NCBI Taxonomy" id="6239"/>
    <lineage>
        <taxon>Eukaryota</taxon>
        <taxon>Metazoa</taxon>
        <taxon>Ecdysozoa</taxon>
        <taxon>Nematoda</taxon>
        <taxon>Chromadorea</taxon>
        <taxon>Rhabditida</taxon>
        <taxon>Rhabditina</taxon>
        <taxon>Rhabditomorpha</taxon>
        <taxon>Rhabditoidea</taxon>
        <taxon>Rhabditidae</taxon>
        <taxon>Peloderinae</taxon>
        <taxon>Caenorhabditis</taxon>
    </lineage>
</organism>
<feature type="chain" id="PRO_0000445076" description="V-type proton ATPase 16 kDa proteolipid subunit c 3">
    <location>
        <begin position="1"/>
        <end position="161"/>
    </location>
</feature>
<feature type="topological domain" description="Lumenal" evidence="4">
    <location>
        <begin position="1"/>
        <end position="15"/>
    </location>
</feature>
<feature type="transmembrane region" description="Helical" evidence="4">
    <location>
        <begin position="16"/>
        <end position="36"/>
    </location>
</feature>
<feature type="topological domain" description="Cytoplasmic" evidence="4">
    <location>
        <begin position="37"/>
        <end position="58"/>
    </location>
</feature>
<feature type="transmembrane region" description="Helical" evidence="4">
    <location>
        <begin position="59"/>
        <end position="79"/>
    </location>
</feature>
<feature type="topological domain" description="Lumenal" evidence="4">
    <location>
        <begin position="80"/>
        <end position="98"/>
    </location>
</feature>
<feature type="transmembrane region" description="Helical" evidence="4">
    <location>
        <begin position="99"/>
        <end position="119"/>
    </location>
</feature>
<feature type="topological domain" description="Cytoplasmic" evidence="4">
    <location>
        <begin position="120"/>
        <end position="137"/>
    </location>
</feature>
<feature type="transmembrane region" description="Helical" evidence="4">
    <location>
        <begin position="138"/>
        <end position="158"/>
    </location>
</feature>
<feature type="topological domain" description="Lumenal" evidence="4">
    <location>
        <begin position="159"/>
        <end position="161"/>
    </location>
</feature>
<feature type="site" description="Essential for proton translocation" evidence="3">
    <location>
        <position position="145"/>
    </location>
</feature>